<accession>B0VN34</accession>
<keyword id="KW-0997">Cell inner membrane</keyword>
<keyword id="KW-1003">Cell membrane</keyword>
<keyword id="KW-0406">Ion transport</keyword>
<keyword id="KW-0472">Membrane</keyword>
<keyword id="KW-0630">Potassium</keyword>
<keyword id="KW-0633">Potassium transport</keyword>
<keyword id="KW-0769">Symport</keyword>
<keyword id="KW-0812">Transmembrane</keyword>
<keyword id="KW-1133">Transmembrane helix</keyword>
<keyword id="KW-0813">Transport</keyword>
<feature type="chain" id="PRO_1000190258" description="Probable potassium transport system protein Kup">
    <location>
        <begin position="1"/>
        <end position="625"/>
    </location>
</feature>
<feature type="transmembrane region" description="Helical" evidence="1">
    <location>
        <begin position="13"/>
        <end position="33"/>
    </location>
</feature>
<feature type="transmembrane region" description="Helical" evidence="1">
    <location>
        <begin position="53"/>
        <end position="73"/>
    </location>
</feature>
<feature type="transmembrane region" description="Helical" evidence="1">
    <location>
        <begin position="103"/>
        <end position="123"/>
    </location>
</feature>
<feature type="transmembrane region" description="Helical" evidence="1">
    <location>
        <begin position="141"/>
        <end position="161"/>
    </location>
</feature>
<feature type="transmembrane region" description="Helical" evidence="1">
    <location>
        <begin position="172"/>
        <end position="192"/>
    </location>
</feature>
<feature type="transmembrane region" description="Helical" evidence="1">
    <location>
        <begin position="206"/>
        <end position="226"/>
    </location>
</feature>
<feature type="transmembrane region" description="Helical" evidence="1">
    <location>
        <begin position="250"/>
        <end position="270"/>
    </location>
</feature>
<feature type="transmembrane region" description="Helical" evidence="1">
    <location>
        <begin position="282"/>
        <end position="302"/>
    </location>
</feature>
<feature type="transmembrane region" description="Helical" evidence="1">
    <location>
        <begin position="340"/>
        <end position="360"/>
    </location>
</feature>
<feature type="transmembrane region" description="Helical" evidence="1">
    <location>
        <begin position="369"/>
        <end position="389"/>
    </location>
</feature>
<feature type="transmembrane region" description="Helical" evidence="1">
    <location>
        <begin position="400"/>
        <end position="420"/>
    </location>
</feature>
<feature type="transmembrane region" description="Helical" evidence="1">
    <location>
        <begin position="422"/>
        <end position="442"/>
    </location>
</feature>
<reference key="1">
    <citation type="journal article" date="2008" name="PLoS ONE">
        <title>Comparative analysis of Acinetobacters: three genomes for three lifestyles.</title>
        <authorList>
            <person name="Vallenet D."/>
            <person name="Nordmann P."/>
            <person name="Barbe V."/>
            <person name="Poirel L."/>
            <person name="Mangenot S."/>
            <person name="Bataille E."/>
            <person name="Dossat C."/>
            <person name="Gas S."/>
            <person name="Kreimeyer A."/>
            <person name="Lenoble P."/>
            <person name="Oztas S."/>
            <person name="Poulain J."/>
            <person name="Segurens B."/>
            <person name="Robert C."/>
            <person name="Abergel C."/>
            <person name="Claverie J.-M."/>
            <person name="Raoult D."/>
            <person name="Medigue C."/>
            <person name="Weissenbach J."/>
            <person name="Cruveiller S."/>
        </authorList>
    </citation>
    <scope>NUCLEOTIDE SEQUENCE [LARGE SCALE GENOMIC DNA]</scope>
    <source>
        <strain>SDF</strain>
    </source>
</reference>
<proteinExistence type="inferred from homology"/>
<evidence type="ECO:0000255" key="1">
    <source>
        <dbReference type="HAMAP-Rule" id="MF_01522"/>
    </source>
</evidence>
<protein>
    <recommendedName>
        <fullName evidence="1">Probable potassium transport system protein Kup</fullName>
    </recommendedName>
</protein>
<organism>
    <name type="scientific">Acinetobacter baumannii (strain SDF)</name>
    <dbReference type="NCBI Taxonomy" id="509170"/>
    <lineage>
        <taxon>Bacteria</taxon>
        <taxon>Pseudomonadati</taxon>
        <taxon>Pseudomonadota</taxon>
        <taxon>Gammaproteobacteria</taxon>
        <taxon>Moraxellales</taxon>
        <taxon>Moraxellaceae</taxon>
        <taxon>Acinetobacter</taxon>
        <taxon>Acinetobacter calcoaceticus/baumannii complex</taxon>
    </lineage>
</organism>
<gene>
    <name evidence="1" type="primary">kup</name>
    <name type="ordered locus">ABSDF3351</name>
</gene>
<comment type="function">
    <text evidence="1">Transport of potassium into the cell. Likely operates as a K(+):H(+) symporter.</text>
</comment>
<comment type="catalytic activity">
    <reaction evidence="1">
        <text>K(+)(in) + H(+)(in) = K(+)(out) + H(+)(out)</text>
        <dbReference type="Rhea" id="RHEA:28490"/>
        <dbReference type="ChEBI" id="CHEBI:15378"/>
        <dbReference type="ChEBI" id="CHEBI:29103"/>
    </reaction>
    <physiologicalReaction direction="right-to-left" evidence="1">
        <dbReference type="Rhea" id="RHEA:28492"/>
    </physiologicalReaction>
</comment>
<comment type="subcellular location">
    <subcellularLocation>
        <location evidence="1">Cell inner membrane</location>
        <topology evidence="1">Multi-pass membrane protein</topology>
    </subcellularLocation>
</comment>
<comment type="similarity">
    <text evidence="1">Belongs to the HAK/KUP transporter (TC 2.A.72) family.</text>
</comment>
<name>KUP_ACIBS</name>
<dbReference type="EMBL" id="CU468230">
    <property type="protein sequence ID" value="CAP02620.1"/>
    <property type="molecule type" value="Genomic_DNA"/>
</dbReference>
<dbReference type="KEGG" id="abm:ABSDF3351"/>
<dbReference type="HOGENOM" id="CLU_008142_4_2_6"/>
<dbReference type="Proteomes" id="UP000001741">
    <property type="component" value="Chromosome"/>
</dbReference>
<dbReference type="GO" id="GO:0005886">
    <property type="term" value="C:plasma membrane"/>
    <property type="evidence" value="ECO:0007669"/>
    <property type="project" value="UniProtKB-SubCell"/>
</dbReference>
<dbReference type="GO" id="GO:0015079">
    <property type="term" value="F:potassium ion transmembrane transporter activity"/>
    <property type="evidence" value="ECO:0007669"/>
    <property type="project" value="UniProtKB-UniRule"/>
</dbReference>
<dbReference type="GO" id="GO:0015293">
    <property type="term" value="F:symporter activity"/>
    <property type="evidence" value="ECO:0007669"/>
    <property type="project" value="UniProtKB-UniRule"/>
</dbReference>
<dbReference type="HAMAP" id="MF_01522">
    <property type="entry name" value="Kup"/>
    <property type="match status" value="1"/>
</dbReference>
<dbReference type="InterPro" id="IPR003855">
    <property type="entry name" value="K+_transporter"/>
</dbReference>
<dbReference type="InterPro" id="IPR053952">
    <property type="entry name" value="K_trans_C"/>
</dbReference>
<dbReference type="InterPro" id="IPR053951">
    <property type="entry name" value="K_trans_N"/>
</dbReference>
<dbReference type="InterPro" id="IPR023051">
    <property type="entry name" value="Kup"/>
</dbReference>
<dbReference type="PANTHER" id="PTHR30540:SF79">
    <property type="entry name" value="LOW AFFINITY POTASSIUM TRANSPORT SYSTEM PROTEIN KUP"/>
    <property type="match status" value="1"/>
</dbReference>
<dbReference type="PANTHER" id="PTHR30540">
    <property type="entry name" value="OSMOTIC STRESS POTASSIUM TRANSPORTER"/>
    <property type="match status" value="1"/>
</dbReference>
<dbReference type="Pfam" id="PF02705">
    <property type="entry name" value="K_trans"/>
    <property type="match status" value="1"/>
</dbReference>
<dbReference type="Pfam" id="PF22776">
    <property type="entry name" value="K_trans_C"/>
    <property type="match status" value="1"/>
</dbReference>
<sequence>MQNTAKKATLPATALAALGVVFGDIGTSPLYALKESFHAAHGLGIQPENVLGILSIIFWCLMLIISIKYVAIVMRADNNGEGGIMALLALNLRKAKIADNKKIYMIAIGFIGASLFFGDGIITPAISVLSAVEGLSIATDVFDPFIMPIAIAIIVTLFLVQKHGPAFVGKFFGPITLVWFLSLGILGIHSVIQTPVVLGMFSPHWAIQFIYHHPIMTFFVMGAVVLTVTGGEALYADMGHFGPVPIRLAWFFVVLPCLVLNYAGQGALLLRDPAAIENPFYLLVPQWALYPMIIMATMATVIASQAVISGVFSLARQAIQLGYLPRLSIKHTSESEEGQIYVPFLNWLLLIAIIILILIFKTSSNLASAYGLAVTLTMLCDTILVAVFIYSAWKWSLPKVLILIIPFFILESVLVGATSLKILSGGWVPLLIGAIAVTILMTWKRGRELTFAKLEHDTLSLDLFVKSIGNSVHWVPGDAVFMTGTPNVVPHAMLHNIKHNKVLHQRNILVTVVIEDVPFVAPEERITTETLAEHFFRIKIFYGFKDEMNVPKALMQAYEQLGLEYDLMHISFFISRDRIVHSVGDGMSPWREKLFISMQRNTSPVSDFYQIPTNRVVELGSQIEI</sequence>